<dbReference type="EC" id="2.7.7.6" evidence="1"/>
<dbReference type="EMBL" id="CR555306">
    <property type="protein sequence ID" value="CAI08307.1"/>
    <property type="molecule type" value="Genomic_DNA"/>
</dbReference>
<dbReference type="RefSeq" id="WP_011237997.1">
    <property type="nucleotide sequence ID" value="NC_006513.1"/>
</dbReference>
<dbReference type="SMR" id="Q5P307"/>
<dbReference type="STRING" id="76114.ebA3853"/>
<dbReference type="KEGG" id="eba:ebA3853"/>
<dbReference type="eggNOG" id="COG0202">
    <property type="taxonomic scope" value="Bacteria"/>
</dbReference>
<dbReference type="HOGENOM" id="CLU_053084_0_1_4"/>
<dbReference type="OrthoDB" id="9805706at2"/>
<dbReference type="Proteomes" id="UP000006552">
    <property type="component" value="Chromosome"/>
</dbReference>
<dbReference type="GO" id="GO:0005737">
    <property type="term" value="C:cytoplasm"/>
    <property type="evidence" value="ECO:0007669"/>
    <property type="project" value="UniProtKB-ARBA"/>
</dbReference>
<dbReference type="GO" id="GO:0000428">
    <property type="term" value="C:DNA-directed RNA polymerase complex"/>
    <property type="evidence" value="ECO:0007669"/>
    <property type="project" value="UniProtKB-KW"/>
</dbReference>
<dbReference type="GO" id="GO:0003677">
    <property type="term" value="F:DNA binding"/>
    <property type="evidence" value="ECO:0007669"/>
    <property type="project" value="UniProtKB-UniRule"/>
</dbReference>
<dbReference type="GO" id="GO:0003899">
    <property type="term" value="F:DNA-directed RNA polymerase activity"/>
    <property type="evidence" value="ECO:0007669"/>
    <property type="project" value="UniProtKB-UniRule"/>
</dbReference>
<dbReference type="GO" id="GO:0046983">
    <property type="term" value="F:protein dimerization activity"/>
    <property type="evidence" value="ECO:0007669"/>
    <property type="project" value="InterPro"/>
</dbReference>
<dbReference type="GO" id="GO:0006351">
    <property type="term" value="P:DNA-templated transcription"/>
    <property type="evidence" value="ECO:0007669"/>
    <property type="project" value="UniProtKB-UniRule"/>
</dbReference>
<dbReference type="CDD" id="cd06928">
    <property type="entry name" value="RNAP_alpha_NTD"/>
    <property type="match status" value="1"/>
</dbReference>
<dbReference type="FunFam" id="1.10.150.20:FF:000001">
    <property type="entry name" value="DNA-directed RNA polymerase subunit alpha"/>
    <property type="match status" value="1"/>
</dbReference>
<dbReference type="FunFam" id="2.170.120.12:FF:000001">
    <property type="entry name" value="DNA-directed RNA polymerase subunit alpha"/>
    <property type="match status" value="1"/>
</dbReference>
<dbReference type="Gene3D" id="1.10.150.20">
    <property type="entry name" value="5' to 3' exonuclease, C-terminal subdomain"/>
    <property type="match status" value="1"/>
</dbReference>
<dbReference type="Gene3D" id="2.170.120.12">
    <property type="entry name" value="DNA-directed RNA polymerase, insert domain"/>
    <property type="match status" value="1"/>
</dbReference>
<dbReference type="Gene3D" id="3.30.1360.10">
    <property type="entry name" value="RNA polymerase, RBP11-like subunit"/>
    <property type="match status" value="1"/>
</dbReference>
<dbReference type="HAMAP" id="MF_00059">
    <property type="entry name" value="RNApol_bact_RpoA"/>
    <property type="match status" value="1"/>
</dbReference>
<dbReference type="InterPro" id="IPR011262">
    <property type="entry name" value="DNA-dir_RNA_pol_insert"/>
</dbReference>
<dbReference type="InterPro" id="IPR011263">
    <property type="entry name" value="DNA-dir_RNA_pol_RpoA/D/Rpb3"/>
</dbReference>
<dbReference type="InterPro" id="IPR011773">
    <property type="entry name" value="DNA-dir_RpoA"/>
</dbReference>
<dbReference type="InterPro" id="IPR036603">
    <property type="entry name" value="RBP11-like"/>
</dbReference>
<dbReference type="InterPro" id="IPR011260">
    <property type="entry name" value="RNAP_asu_C"/>
</dbReference>
<dbReference type="InterPro" id="IPR036643">
    <property type="entry name" value="RNApol_insert_sf"/>
</dbReference>
<dbReference type="NCBIfam" id="NF003513">
    <property type="entry name" value="PRK05182.1-2"/>
    <property type="match status" value="1"/>
</dbReference>
<dbReference type="NCBIfam" id="NF003519">
    <property type="entry name" value="PRK05182.2-5"/>
    <property type="match status" value="1"/>
</dbReference>
<dbReference type="NCBIfam" id="TIGR02027">
    <property type="entry name" value="rpoA"/>
    <property type="match status" value="1"/>
</dbReference>
<dbReference type="Pfam" id="PF01000">
    <property type="entry name" value="RNA_pol_A_bac"/>
    <property type="match status" value="1"/>
</dbReference>
<dbReference type="Pfam" id="PF03118">
    <property type="entry name" value="RNA_pol_A_CTD"/>
    <property type="match status" value="1"/>
</dbReference>
<dbReference type="Pfam" id="PF01193">
    <property type="entry name" value="RNA_pol_L"/>
    <property type="match status" value="1"/>
</dbReference>
<dbReference type="SMART" id="SM00662">
    <property type="entry name" value="RPOLD"/>
    <property type="match status" value="1"/>
</dbReference>
<dbReference type="SUPFAM" id="SSF47789">
    <property type="entry name" value="C-terminal domain of RNA polymerase alpha subunit"/>
    <property type="match status" value="1"/>
</dbReference>
<dbReference type="SUPFAM" id="SSF56553">
    <property type="entry name" value="Insert subdomain of RNA polymerase alpha subunit"/>
    <property type="match status" value="1"/>
</dbReference>
<dbReference type="SUPFAM" id="SSF55257">
    <property type="entry name" value="RBP11-like subunits of RNA polymerase"/>
    <property type="match status" value="1"/>
</dbReference>
<feature type="chain" id="PRO_0000225256" description="DNA-directed RNA polymerase subunit alpha">
    <location>
        <begin position="1"/>
        <end position="326"/>
    </location>
</feature>
<feature type="region of interest" description="Alpha N-terminal domain (alpha-NTD)" evidence="1">
    <location>
        <begin position="1"/>
        <end position="231"/>
    </location>
</feature>
<feature type="region of interest" description="Alpha C-terminal domain (alpha-CTD)" evidence="1">
    <location>
        <begin position="245"/>
        <end position="326"/>
    </location>
</feature>
<sequence length="326" mass="35631">MQSNSLLKPRIIDVQSVSPVQARVTMEPFERGFGHTLGNALRRILLSSLPGYAPTEVSIEGVLHEYSTLDGVREDIVDLLLNLKGVVLKLHSRSEATLRLAKSGDGVVTARDIEVGHDVEIINPDHVIAHLAPGGKLDMQIKVEEGRGYVPGNVRPAAGDTKTIGRVVLDASFSPVRRVSYLVESARVEQRTDLDRLVIDIETNGAVDPEEAIRYAARVLMDQLSVFADLEGTAPVVEQSAAQTIDPVLLRPVDDLELTVRSANCLKAENIYYIGDLIQRTETELLKTPNLGRKSLNEIKEVLASRGLTLGMKLENWPPAGLEKLG</sequence>
<proteinExistence type="inferred from homology"/>
<evidence type="ECO:0000255" key="1">
    <source>
        <dbReference type="HAMAP-Rule" id="MF_00059"/>
    </source>
</evidence>
<protein>
    <recommendedName>
        <fullName evidence="1">DNA-directed RNA polymerase subunit alpha</fullName>
        <shortName evidence="1">RNAP subunit alpha</shortName>
        <ecNumber evidence="1">2.7.7.6</ecNumber>
    </recommendedName>
    <alternativeName>
        <fullName evidence="1">RNA polymerase subunit alpha</fullName>
    </alternativeName>
    <alternativeName>
        <fullName evidence="1">Transcriptase subunit alpha</fullName>
    </alternativeName>
</protein>
<name>RPOA_AROAE</name>
<accession>Q5P307</accession>
<comment type="function">
    <text evidence="1">DNA-dependent RNA polymerase catalyzes the transcription of DNA into RNA using the four ribonucleoside triphosphates as substrates.</text>
</comment>
<comment type="catalytic activity">
    <reaction evidence="1">
        <text>RNA(n) + a ribonucleoside 5'-triphosphate = RNA(n+1) + diphosphate</text>
        <dbReference type="Rhea" id="RHEA:21248"/>
        <dbReference type="Rhea" id="RHEA-COMP:14527"/>
        <dbReference type="Rhea" id="RHEA-COMP:17342"/>
        <dbReference type="ChEBI" id="CHEBI:33019"/>
        <dbReference type="ChEBI" id="CHEBI:61557"/>
        <dbReference type="ChEBI" id="CHEBI:140395"/>
        <dbReference type="EC" id="2.7.7.6"/>
    </reaction>
</comment>
<comment type="subunit">
    <text evidence="1">Homodimer. The RNAP catalytic core consists of 2 alpha, 1 beta, 1 beta' and 1 omega subunit. When a sigma factor is associated with the core the holoenzyme is formed, which can initiate transcription.</text>
</comment>
<comment type="domain">
    <text evidence="1">The N-terminal domain is essential for RNAP assembly and basal transcription, whereas the C-terminal domain is involved in interaction with transcriptional regulators and with upstream promoter elements.</text>
</comment>
<comment type="similarity">
    <text evidence="1">Belongs to the RNA polymerase alpha chain family.</text>
</comment>
<gene>
    <name evidence="1" type="primary">rpoA</name>
    <name type="ordered locus">AZOSEA21820</name>
    <name type="ORF">ebA3853</name>
</gene>
<reference key="1">
    <citation type="journal article" date="2005" name="Arch. Microbiol.">
        <title>The genome sequence of an anaerobic aromatic-degrading denitrifying bacterium, strain EbN1.</title>
        <authorList>
            <person name="Rabus R."/>
            <person name="Kube M."/>
            <person name="Heider J."/>
            <person name="Beck A."/>
            <person name="Heitmann K."/>
            <person name="Widdel F."/>
            <person name="Reinhardt R."/>
        </authorList>
    </citation>
    <scope>NUCLEOTIDE SEQUENCE [LARGE SCALE GENOMIC DNA]</scope>
    <source>
        <strain>DSM 19018 / LMG 30748 / EbN1</strain>
    </source>
</reference>
<keyword id="KW-0240">DNA-directed RNA polymerase</keyword>
<keyword id="KW-0548">Nucleotidyltransferase</keyword>
<keyword id="KW-1185">Reference proteome</keyword>
<keyword id="KW-0804">Transcription</keyword>
<keyword id="KW-0808">Transferase</keyword>
<organism>
    <name type="scientific">Aromatoleum aromaticum (strain DSM 19018 / LMG 30748 / EbN1)</name>
    <name type="common">Azoarcus sp. (strain EbN1)</name>
    <dbReference type="NCBI Taxonomy" id="76114"/>
    <lineage>
        <taxon>Bacteria</taxon>
        <taxon>Pseudomonadati</taxon>
        <taxon>Pseudomonadota</taxon>
        <taxon>Betaproteobacteria</taxon>
        <taxon>Rhodocyclales</taxon>
        <taxon>Rhodocyclaceae</taxon>
        <taxon>Aromatoleum</taxon>
    </lineage>
</organism>